<name>PUR5_XANOP</name>
<evidence type="ECO:0000255" key="1">
    <source>
        <dbReference type="HAMAP-Rule" id="MF_00741"/>
    </source>
</evidence>
<accession>B2SJY0</accession>
<organism>
    <name type="scientific">Xanthomonas oryzae pv. oryzae (strain PXO99A)</name>
    <dbReference type="NCBI Taxonomy" id="360094"/>
    <lineage>
        <taxon>Bacteria</taxon>
        <taxon>Pseudomonadati</taxon>
        <taxon>Pseudomonadota</taxon>
        <taxon>Gammaproteobacteria</taxon>
        <taxon>Lysobacterales</taxon>
        <taxon>Lysobacteraceae</taxon>
        <taxon>Xanthomonas</taxon>
    </lineage>
</organism>
<comment type="catalytic activity">
    <reaction evidence="1">
        <text>2-formamido-N(1)-(5-O-phospho-beta-D-ribosyl)acetamidine + ATP = 5-amino-1-(5-phospho-beta-D-ribosyl)imidazole + ADP + phosphate + H(+)</text>
        <dbReference type="Rhea" id="RHEA:23032"/>
        <dbReference type="ChEBI" id="CHEBI:15378"/>
        <dbReference type="ChEBI" id="CHEBI:30616"/>
        <dbReference type="ChEBI" id="CHEBI:43474"/>
        <dbReference type="ChEBI" id="CHEBI:137981"/>
        <dbReference type="ChEBI" id="CHEBI:147287"/>
        <dbReference type="ChEBI" id="CHEBI:456216"/>
        <dbReference type="EC" id="6.3.3.1"/>
    </reaction>
</comment>
<comment type="pathway">
    <text evidence="1">Purine metabolism; IMP biosynthesis via de novo pathway; 5-amino-1-(5-phospho-D-ribosyl)imidazole from N(2)-formyl-N(1)-(5-phospho-D-ribosyl)glycinamide: step 2/2.</text>
</comment>
<comment type="subcellular location">
    <subcellularLocation>
        <location evidence="1">Cytoplasm</location>
    </subcellularLocation>
</comment>
<comment type="similarity">
    <text evidence="1">Belongs to the AIR synthase family.</text>
</comment>
<protein>
    <recommendedName>
        <fullName evidence="1">Phosphoribosylformylglycinamidine cyclo-ligase</fullName>
        <ecNumber evidence="1">6.3.3.1</ecNumber>
    </recommendedName>
    <alternativeName>
        <fullName evidence="1">AIR synthase</fullName>
    </alternativeName>
    <alternativeName>
        <fullName evidence="1">AIRS</fullName>
    </alternativeName>
    <alternativeName>
        <fullName evidence="1">Phosphoribosyl-aminoimidazole synthetase</fullName>
    </alternativeName>
</protein>
<gene>
    <name evidence="1" type="primary">purM</name>
    <name type="ordered locus">PXO_02241</name>
</gene>
<proteinExistence type="inferred from homology"/>
<reference key="1">
    <citation type="journal article" date="2008" name="BMC Genomics">
        <title>Genome sequence and rapid evolution of the rice pathogen Xanthomonas oryzae pv. oryzae PXO99A.</title>
        <authorList>
            <person name="Salzberg S.L."/>
            <person name="Sommer D.D."/>
            <person name="Schatz M.C."/>
            <person name="Phillippy A.M."/>
            <person name="Rabinowicz P.D."/>
            <person name="Tsuge S."/>
            <person name="Furutani A."/>
            <person name="Ochiai H."/>
            <person name="Delcher A.L."/>
            <person name="Kelley D."/>
            <person name="Madupu R."/>
            <person name="Puiu D."/>
            <person name="Radune D."/>
            <person name="Shumway M."/>
            <person name="Trapnell C."/>
            <person name="Aparna G."/>
            <person name="Jha G."/>
            <person name="Pandey A."/>
            <person name="Patil P.B."/>
            <person name="Ishihara H."/>
            <person name="Meyer D.F."/>
            <person name="Szurek B."/>
            <person name="Verdier V."/>
            <person name="Koebnik R."/>
            <person name="Dow J.M."/>
            <person name="Ryan R.P."/>
            <person name="Hirata H."/>
            <person name="Tsuyumu S."/>
            <person name="Won Lee S."/>
            <person name="Seo Y.-S."/>
            <person name="Sriariyanum M."/>
            <person name="Ronald P.C."/>
            <person name="Sonti R.V."/>
            <person name="Van Sluys M.-A."/>
            <person name="Leach J.E."/>
            <person name="White F.F."/>
            <person name="Bogdanove A.J."/>
        </authorList>
    </citation>
    <scope>NUCLEOTIDE SEQUENCE [LARGE SCALE GENOMIC DNA]</scope>
    <source>
        <strain>PXO99A</strain>
    </source>
</reference>
<feature type="chain" id="PRO_1000193057" description="Phosphoribosylformylglycinamidine cyclo-ligase">
    <location>
        <begin position="1"/>
        <end position="341"/>
    </location>
</feature>
<dbReference type="EC" id="6.3.3.1" evidence="1"/>
<dbReference type="EMBL" id="CP000967">
    <property type="protein sequence ID" value="ACD60497.1"/>
    <property type="molecule type" value="Genomic_DNA"/>
</dbReference>
<dbReference type="SMR" id="B2SJY0"/>
<dbReference type="KEGG" id="xop:PXO_02241"/>
<dbReference type="eggNOG" id="COG0150">
    <property type="taxonomic scope" value="Bacteria"/>
</dbReference>
<dbReference type="HOGENOM" id="CLU_047116_0_0_6"/>
<dbReference type="UniPathway" id="UPA00074">
    <property type="reaction ID" value="UER00129"/>
</dbReference>
<dbReference type="Proteomes" id="UP000001740">
    <property type="component" value="Chromosome"/>
</dbReference>
<dbReference type="GO" id="GO:0005829">
    <property type="term" value="C:cytosol"/>
    <property type="evidence" value="ECO:0007669"/>
    <property type="project" value="TreeGrafter"/>
</dbReference>
<dbReference type="GO" id="GO:0005524">
    <property type="term" value="F:ATP binding"/>
    <property type="evidence" value="ECO:0007669"/>
    <property type="project" value="UniProtKB-KW"/>
</dbReference>
<dbReference type="GO" id="GO:0004637">
    <property type="term" value="F:phosphoribosylamine-glycine ligase activity"/>
    <property type="evidence" value="ECO:0007669"/>
    <property type="project" value="TreeGrafter"/>
</dbReference>
<dbReference type="GO" id="GO:0004641">
    <property type="term" value="F:phosphoribosylformylglycinamidine cyclo-ligase activity"/>
    <property type="evidence" value="ECO:0007669"/>
    <property type="project" value="UniProtKB-UniRule"/>
</dbReference>
<dbReference type="GO" id="GO:0006189">
    <property type="term" value="P:'de novo' IMP biosynthetic process"/>
    <property type="evidence" value="ECO:0007669"/>
    <property type="project" value="UniProtKB-UniRule"/>
</dbReference>
<dbReference type="GO" id="GO:0046084">
    <property type="term" value="P:adenine biosynthetic process"/>
    <property type="evidence" value="ECO:0007669"/>
    <property type="project" value="TreeGrafter"/>
</dbReference>
<dbReference type="CDD" id="cd02196">
    <property type="entry name" value="PurM"/>
    <property type="match status" value="1"/>
</dbReference>
<dbReference type="FunFam" id="3.30.1330.10:FF:000001">
    <property type="entry name" value="Phosphoribosylformylglycinamidine cyclo-ligase"/>
    <property type="match status" value="1"/>
</dbReference>
<dbReference type="FunFam" id="3.90.650.10:FF:000001">
    <property type="entry name" value="Phosphoribosylformylglycinamidine cyclo-ligase"/>
    <property type="match status" value="1"/>
</dbReference>
<dbReference type="Gene3D" id="3.90.650.10">
    <property type="entry name" value="PurM-like C-terminal domain"/>
    <property type="match status" value="1"/>
</dbReference>
<dbReference type="Gene3D" id="3.30.1330.10">
    <property type="entry name" value="PurM-like, N-terminal domain"/>
    <property type="match status" value="1"/>
</dbReference>
<dbReference type="HAMAP" id="MF_00741">
    <property type="entry name" value="AIRS"/>
    <property type="match status" value="1"/>
</dbReference>
<dbReference type="InterPro" id="IPR010918">
    <property type="entry name" value="PurM-like_C_dom"/>
</dbReference>
<dbReference type="InterPro" id="IPR036676">
    <property type="entry name" value="PurM-like_C_sf"/>
</dbReference>
<dbReference type="InterPro" id="IPR016188">
    <property type="entry name" value="PurM-like_N"/>
</dbReference>
<dbReference type="InterPro" id="IPR036921">
    <property type="entry name" value="PurM-like_N_sf"/>
</dbReference>
<dbReference type="InterPro" id="IPR004733">
    <property type="entry name" value="PurM_cligase"/>
</dbReference>
<dbReference type="NCBIfam" id="TIGR00878">
    <property type="entry name" value="purM"/>
    <property type="match status" value="1"/>
</dbReference>
<dbReference type="PANTHER" id="PTHR10520:SF12">
    <property type="entry name" value="TRIFUNCTIONAL PURINE BIOSYNTHETIC PROTEIN ADENOSINE-3"/>
    <property type="match status" value="1"/>
</dbReference>
<dbReference type="PANTHER" id="PTHR10520">
    <property type="entry name" value="TRIFUNCTIONAL PURINE BIOSYNTHETIC PROTEIN ADENOSINE-3-RELATED"/>
    <property type="match status" value="1"/>
</dbReference>
<dbReference type="Pfam" id="PF00586">
    <property type="entry name" value="AIRS"/>
    <property type="match status" value="1"/>
</dbReference>
<dbReference type="Pfam" id="PF02769">
    <property type="entry name" value="AIRS_C"/>
    <property type="match status" value="1"/>
</dbReference>
<dbReference type="SUPFAM" id="SSF56042">
    <property type="entry name" value="PurM C-terminal domain-like"/>
    <property type="match status" value="1"/>
</dbReference>
<dbReference type="SUPFAM" id="SSF55326">
    <property type="entry name" value="PurM N-terminal domain-like"/>
    <property type="match status" value="1"/>
</dbReference>
<sequence>MTYRDAGVDIDAGNALVERIKPLVKRSFRPEVMGGLGGFGALFDLSGKYKEPVLVSGTDGVGTKLKLAQQLGRHDTIGIDLVGMCVNDVLVQGAEPLFFLDYFATGKLDVDTAAAVVGGIARGCALSGCALIGGETAEMPDMYPPGEYDLAGFTVGAVEKSQLLDGAQVRDGDVLIGIASSGPHSNGYSLIRKIYERAGAPAEHVLDDGTKLIDALMAPTALYVKPVLALLKSHGQAIHAMAHITGGGLTENIIRVIPDGLGLDIDASAWTLPPVFAWLQREGAVADAEMWRTFNCGIGFVLIAAPAEAAALEQALDAQSLAHWRIGQVVPAHGDERVRID</sequence>
<keyword id="KW-0067">ATP-binding</keyword>
<keyword id="KW-0963">Cytoplasm</keyword>
<keyword id="KW-0436">Ligase</keyword>
<keyword id="KW-0547">Nucleotide-binding</keyword>
<keyword id="KW-0658">Purine biosynthesis</keyword>